<evidence type="ECO:0000255" key="1">
    <source>
        <dbReference type="HAMAP-Rule" id="MF_00075"/>
    </source>
</evidence>
<dbReference type="EMBL" id="CP000241">
    <property type="protein sequence ID" value="ABF85310.1"/>
    <property type="molecule type" value="Genomic_DNA"/>
</dbReference>
<dbReference type="RefSeq" id="WP_000090248.1">
    <property type="nucleotide sequence ID" value="NC_008086.1"/>
</dbReference>
<dbReference type="SMR" id="Q1CRW2"/>
<dbReference type="GeneID" id="93237571"/>
<dbReference type="KEGG" id="hpa:HPAG1_1243"/>
<dbReference type="HOGENOM" id="CLU_151267_1_0_7"/>
<dbReference type="GO" id="GO:0005829">
    <property type="term" value="C:cytosol"/>
    <property type="evidence" value="ECO:0007669"/>
    <property type="project" value="TreeGrafter"/>
</dbReference>
<dbReference type="GO" id="GO:0043022">
    <property type="term" value="F:ribosome binding"/>
    <property type="evidence" value="ECO:0007669"/>
    <property type="project" value="UniProtKB-UniRule"/>
</dbReference>
<dbReference type="GO" id="GO:0019843">
    <property type="term" value="F:rRNA binding"/>
    <property type="evidence" value="ECO:0007669"/>
    <property type="project" value="UniProtKB-UniRule"/>
</dbReference>
<dbReference type="GO" id="GO:0003743">
    <property type="term" value="F:translation initiation factor activity"/>
    <property type="evidence" value="ECO:0007669"/>
    <property type="project" value="UniProtKB-UniRule"/>
</dbReference>
<dbReference type="CDD" id="cd04451">
    <property type="entry name" value="S1_IF1"/>
    <property type="match status" value="1"/>
</dbReference>
<dbReference type="FunFam" id="2.40.50.140:FF:000002">
    <property type="entry name" value="Translation initiation factor IF-1"/>
    <property type="match status" value="1"/>
</dbReference>
<dbReference type="Gene3D" id="2.40.50.140">
    <property type="entry name" value="Nucleic acid-binding proteins"/>
    <property type="match status" value="1"/>
</dbReference>
<dbReference type="HAMAP" id="MF_00075">
    <property type="entry name" value="IF_1"/>
    <property type="match status" value="1"/>
</dbReference>
<dbReference type="InterPro" id="IPR012340">
    <property type="entry name" value="NA-bd_OB-fold"/>
</dbReference>
<dbReference type="InterPro" id="IPR006196">
    <property type="entry name" value="RNA-binding_domain_S1_IF1"/>
</dbReference>
<dbReference type="InterPro" id="IPR003029">
    <property type="entry name" value="S1_domain"/>
</dbReference>
<dbReference type="InterPro" id="IPR004368">
    <property type="entry name" value="TIF_IF1"/>
</dbReference>
<dbReference type="NCBIfam" id="TIGR00008">
    <property type="entry name" value="infA"/>
    <property type="match status" value="1"/>
</dbReference>
<dbReference type="PANTHER" id="PTHR33370">
    <property type="entry name" value="TRANSLATION INITIATION FACTOR IF-1, CHLOROPLASTIC"/>
    <property type="match status" value="1"/>
</dbReference>
<dbReference type="PANTHER" id="PTHR33370:SF1">
    <property type="entry name" value="TRANSLATION INITIATION FACTOR IF-1, CHLOROPLASTIC"/>
    <property type="match status" value="1"/>
</dbReference>
<dbReference type="Pfam" id="PF01176">
    <property type="entry name" value="eIF-1a"/>
    <property type="match status" value="1"/>
</dbReference>
<dbReference type="SMART" id="SM00316">
    <property type="entry name" value="S1"/>
    <property type="match status" value="1"/>
</dbReference>
<dbReference type="SUPFAM" id="SSF50249">
    <property type="entry name" value="Nucleic acid-binding proteins"/>
    <property type="match status" value="1"/>
</dbReference>
<dbReference type="PROSITE" id="PS50832">
    <property type="entry name" value="S1_IF1_TYPE"/>
    <property type="match status" value="1"/>
</dbReference>
<comment type="function">
    <text evidence="1">One of the essential components for the initiation of protein synthesis. Stabilizes the binding of IF-2 and IF-3 on the 30S subunit to which N-formylmethionyl-tRNA(fMet) subsequently binds. Helps modulate mRNA selection, yielding the 30S pre-initiation complex (PIC). Upon addition of the 50S ribosomal subunit IF-1, IF-2 and IF-3 are released leaving the mature 70S translation initiation complex.</text>
</comment>
<comment type="subunit">
    <text evidence="1">Component of the 30S ribosomal translation pre-initiation complex which assembles on the 30S ribosome in the order IF-2 and IF-3, IF-1 and N-formylmethionyl-tRNA(fMet); mRNA recruitment can occur at any time during PIC assembly.</text>
</comment>
<comment type="subcellular location">
    <subcellularLocation>
        <location evidence="1">Cytoplasm</location>
    </subcellularLocation>
</comment>
<comment type="similarity">
    <text evidence="1">Belongs to the IF-1 family.</text>
</comment>
<gene>
    <name evidence="1" type="primary">infA</name>
    <name type="ordered locus">HPAG1_1243</name>
</gene>
<protein>
    <recommendedName>
        <fullName evidence="1">Translation initiation factor IF-1</fullName>
    </recommendedName>
</protein>
<proteinExistence type="inferred from homology"/>
<name>IF1_HELPH</name>
<feature type="chain" id="PRO_0000263810" description="Translation initiation factor IF-1">
    <location>
        <begin position="1"/>
        <end position="72"/>
    </location>
</feature>
<feature type="domain" description="S1-like" evidence="1">
    <location>
        <begin position="1"/>
        <end position="72"/>
    </location>
</feature>
<sequence>MARDDVIEVDGKVIEALPNATFKVELDNKHVVLCRISGKMRMHYIRIALGDRVKLELTPYSLDKGRITFRYK</sequence>
<keyword id="KW-0963">Cytoplasm</keyword>
<keyword id="KW-0396">Initiation factor</keyword>
<keyword id="KW-0648">Protein biosynthesis</keyword>
<keyword id="KW-0694">RNA-binding</keyword>
<keyword id="KW-0699">rRNA-binding</keyword>
<accession>Q1CRW2</accession>
<reference key="1">
    <citation type="journal article" date="2006" name="Proc. Natl. Acad. Sci. U.S.A.">
        <title>The complete genome sequence of a chronic atrophic gastritis Helicobacter pylori strain: evolution during disease progression.</title>
        <authorList>
            <person name="Oh J.D."/>
            <person name="Kling-Baeckhed H."/>
            <person name="Giannakis M."/>
            <person name="Xu J."/>
            <person name="Fulton R.S."/>
            <person name="Fulton L.A."/>
            <person name="Cordum H.S."/>
            <person name="Wang C."/>
            <person name="Elliott G."/>
            <person name="Edwards J."/>
            <person name="Mardis E.R."/>
            <person name="Engstrand L.G."/>
            <person name="Gordon J.I."/>
        </authorList>
    </citation>
    <scope>NUCLEOTIDE SEQUENCE [LARGE SCALE GENOMIC DNA]</scope>
    <source>
        <strain>HPAG1</strain>
    </source>
</reference>
<organism>
    <name type="scientific">Helicobacter pylori (strain HPAG1)</name>
    <dbReference type="NCBI Taxonomy" id="357544"/>
    <lineage>
        <taxon>Bacteria</taxon>
        <taxon>Pseudomonadati</taxon>
        <taxon>Campylobacterota</taxon>
        <taxon>Epsilonproteobacteria</taxon>
        <taxon>Campylobacterales</taxon>
        <taxon>Helicobacteraceae</taxon>
        <taxon>Helicobacter</taxon>
    </lineage>
</organism>